<dbReference type="EC" id="5.2.1.8" evidence="1"/>
<dbReference type="EMBL" id="CP000381">
    <property type="protein sequence ID" value="ABX73398.1"/>
    <property type="molecule type" value="Genomic_DNA"/>
</dbReference>
<dbReference type="RefSeq" id="WP_012221732.1">
    <property type="nucleotide sequence ID" value="NC_010120.1"/>
</dbReference>
<dbReference type="SMR" id="A9LZP0"/>
<dbReference type="KEGG" id="nmn:NMCC_1225"/>
<dbReference type="HOGENOM" id="CLU_033058_2_0_4"/>
<dbReference type="Proteomes" id="UP000001177">
    <property type="component" value="Chromosome"/>
</dbReference>
<dbReference type="GO" id="GO:0005737">
    <property type="term" value="C:cytoplasm"/>
    <property type="evidence" value="ECO:0007669"/>
    <property type="project" value="UniProtKB-SubCell"/>
</dbReference>
<dbReference type="GO" id="GO:0003755">
    <property type="term" value="F:peptidyl-prolyl cis-trans isomerase activity"/>
    <property type="evidence" value="ECO:0007669"/>
    <property type="project" value="UniProtKB-UniRule"/>
</dbReference>
<dbReference type="GO" id="GO:0044183">
    <property type="term" value="F:protein folding chaperone"/>
    <property type="evidence" value="ECO:0007669"/>
    <property type="project" value="TreeGrafter"/>
</dbReference>
<dbReference type="GO" id="GO:0043022">
    <property type="term" value="F:ribosome binding"/>
    <property type="evidence" value="ECO:0007669"/>
    <property type="project" value="TreeGrafter"/>
</dbReference>
<dbReference type="GO" id="GO:0051083">
    <property type="term" value="P:'de novo' cotranslational protein folding"/>
    <property type="evidence" value="ECO:0007669"/>
    <property type="project" value="TreeGrafter"/>
</dbReference>
<dbReference type="GO" id="GO:0051301">
    <property type="term" value="P:cell division"/>
    <property type="evidence" value="ECO:0007669"/>
    <property type="project" value="UniProtKB-KW"/>
</dbReference>
<dbReference type="GO" id="GO:0061077">
    <property type="term" value="P:chaperone-mediated protein folding"/>
    <property type="evidence" value="ECO:0007669"/>
    <property type="project" value="TreeGrafter"/>
</dbReference>
<dbReference type="GO" id="GO:0015031">
    <property type="term" value="P:protein transport"/>
    <property type="evidence" value="ECO:0007669"/>
    <property type="project" value="UniProtKB-UniRule"/>
</dbReference>
<dbReference type="GO" id="GO:0043335">
    <property type="term" value="P:protein unfolding"/>
    <property type="evidence" value="ECO:0007669"/>
    <property type="project" value="TreeGrafter"/>
</dbReference>
<dbReference type="FunFam" id="3.10.50.40:FF:000001">
    <property type="entry name" value="Trigger factor"/>
    <property type="match status" value="1"/>
</dbReference>
<dbReference type="Gene3D" id="3.10.50.40">
    <property type="match status" value="1"/>
</dbReference>
<dbReference type="Gene3D" id="3.30.70.1050">
    <property type="entry name" value="Trigger factor ribosome-binding domain"/>
    <property type="match status" value="1"/>
</dbReference>
<dbReference type="Gene3D" id="1.10.3120.10">
    <property type="entry name" value="Trigger factor, C-terminal domain"/>
    <property type="match status" value="1"/>
</dbReference>
<dbReference type="HAMAP" id="MF_00303">
    <property type="entry name" value="Trigger_factor_Tig"/>
    <property type="match status" value="1"/>
</dbReference>
<dbReference type="InterPro" id="IPR046357">
    <property type="entry name" value="PPIase_dom_sf"/>
</dbReference>
<dbReference type="InterPro" id="IPR001179">
    <property type="entry name" value="PPIase_FKBP_dom"/>
</dbReference>
<dbReference type="InterPro" id="IPR005215">
    <property type="entry name" value="Trig_fac"/>
</dbReference>
<dbReference type="InterPro" id="IPR008880">
    <property type="entry name" value="Trigger_fac_C"/>
</dbReference>
<dbReference type="InterPro" id="IPR037041">
    <property type="entry name" value="Trigger_fac_C_sf"/>
</dbReference>
<dbReference type="InterPro" id="IPR008881">
    <property type="entry name" value="Trigger_fac_ribosome-bd_bac"/>
</dbReference>
<dbReference type="InterPro" id="IPR036611">
    <property type="entry name" value="Trigger_fac_ribosome-bd_sf"/>
</dbReference>
<dbReference type="InterPro" id="IPR027304">
    <property type="entry name" value="Trigger_fact/SurA_dom_sf"/>
</dbReference>
<dbReference type="NCBIfam" id="TIGR00115">
    <property type="entry name" value="tig"/>
    <property type="match status" value="1"/>
</dbReference>
<dbReference type="PANTHER" id="PTHR30560">
    <property type="entry name" value="TRIGGER FACTOR CHAPERONE AND PEPTIDYL-PROLYL CIS/TRANS ISOMERASE"/>
    <property type="match status" value="1"/>
</dbReference>
<dbReference type="PANTHER" id="PTHR30560:SF3">
    <property type="entry name" value="TRIGGER FACTOR-LIKE PROTEIN TIG, CHLOROPLASTIC"/>
    <property type="match status" value="1"/>
</dbReference>
<dbReference type="Pfam" id="PF00254">
    <property type="entry name" value="FKBP_C"/>
    <property type="match status" value="1"/>
</dbReference>
<dbReference type="Pfam" id="PF05698">
    <property type="entry name" value="Trigger_C"/>
    <property type="match status" value="1"/>
</dbReference>
<dbReference type="Pfam" id="PF05697">
    <property type="entry name" value="Trigger_N"/>
    <property type="match status" value="1"/>
</dbReference>
<dbReference type="PIRSF" id="PIRSF003095">
    <property type="entry name" value="Trigger_factor"/>
    <property type="match status" value="1"/>
</dbReference>
<dbReference type="SUPFAM" id="SSF54534">
    <property type="entry name" value="FKBP-like"/>
    <property type="match status" value="1"/>
</dbReference>
<dbReference type="SUPFAM" id="SSF109998">
    <property type="entry name" value="Triger factor/SurA peptide-binding domain-like"/>
    <property type="match status" value="1"/>
</dbReference>
<dbReference type="SUPFAM" id="SSF102735">
    <property type="entry name" value="Trigger factor ribosome-binding domain"/>
    <property type="match status" value="1"/>
</dbReference>
<dbReference type="PROSITE" id="PS50059">
    <property type="entry name" value="FKBP_PPIASE"/>
    <property type="match status" value="1"/>
</dbReference>
<keyword id="KW-0131">Cell cycle</keyword>
<keyword id="KW-0132">Cell division</keyword>
<keyword id="KW-0143">Chaperone</keyword>
<keyword id="KW-0963">Cytoplasm</keyword>
<keyword id="KW-0413">Isomerase</keyword>
<keyword id="KW-0697">Rotamase</keyword>
<accession>A9LZP0</accession>
<reference key="1">
    <citation type="journal article" date="2008" name="Genomics">
        <title>Characterization of ST-4821 complex, a unique Neisseria meningitidis clone.</title>
        <authorList>
            <person name="Peng J."/>
            <person name="Yang L."/>
            <person name="Yang F."/>
            <person name="Yang J."/>
            <person name="Yan Y."/>
            <person name="Nie H."/>
            <person name="Zhang X."/>
            <person name="Xiong Z."/>
            <person name="Jiang Y."/>
            <person name="Cheng F."/>
            <person name="Xu X."/>
            <person name="Chen S."/>
            <person name="Sun L."/>
            <person name="Li W."/>
            <person name="Shen Y."/>
            <person name="Shao Z."/>
            <person name="Liang X."/>
            <person name="Xu J."/>
            <person name="Jin Q."/>
        </authorList>
    </citation>
    <scope>NUCLEOTIDE SEQUENCE [LARGE SCALE GENOMIC DNA]</scope>
    <source>
        <strain>053442</strain>
    </source>
</reference>
<organism>
    <name type="scientific">Neisseria meningitidis serogroup C (strain 053442)</name>
    <dbReference type="NCBI Taxonomy" id="374833"/>
    <lineage>
        <taxon>Bacteria</taxon>
        <taxon>Pseudomonadati</taxon>
        <taxon>Pseudomonadota</taxon>
        <taxon>Betaproteobacteria</taxon>
        <taxon>Neisseriales</taxon>
        <taxon>Neisseriaceae</taxon>
        <taxon>Neisseria</taxon>
    </lineage>
</organism>
<protein>
    <recommendedName>
        <fullName evidence="1">Trigger factor</fullName>
        <shortName evidence="1">TF</shortName>
        <ecNumber evidence="1">5.2.1.8</ecNumber>
    </recommendedName>
    <alternativeName>
        <fullName evidence="1">PPIase</fullName>
    </alternativeName>
</protein>
<proteinExistence type="inferred from homology"/>
<name>TIG_NEIM0</name>
<evidence type="ECO:0000255" key="1">
    <source>
        <dbReference type="HAMAP-Rule" id="MF_00303"/>
    </source>
</evidence>
<sequence>MSVTVETLENLERKVVLSLPWSEINAETDKKLKQTQRRAKIDGFRPGKAPLKMIAQMYGASAQNDVINELVQRRFHDVAVAQELKVAGFPRFEGVEEQDDKESFKVAAIFEVFPEVVIGDLSAQEVEKVTASVGDAEVDQTVEILRKQRTRFNHVEREARNGDRVIIDFEGKIDGEPFAGGASKNYAFVLGASQMLPEFEAGVVGMKAGESKDVTVNFPEDYHGKDVAGKTAVFTITLNNVSEATLPEVDADFAKALGIADGDVAKMREEVQKNVSREVERRVNEQTKESVMNALLKAVELKAPVALVNEEAARLANEMKQNFVNQGMADAANLDLPLDMFKEQAERRVSLGLILAKLVDENKLEPTEEQIKAVVANFAESYEDPQEVIDWYYADPSRLQAPTSLAVESNVVDFVLGKAKVNEKALSFDEVMGAQA</sequence>
<comment type="function">
    <text evidence="1">Involved in protein export. Acts as a chaperone by maintaining the newly synthesized protein in an open conformation. Functions as a peptidyl-prolyl cis-trans isomerase.</text>
</comment>
<comment type="catalytic activity">
    <reaction evidence="1">
        <text>[protein]-peptidylproline (omega=180) = [protein]-peptidylproline (omega=0)</text>
        <dbReference type="Rhea" id="RHEA:16237"/>
        <dbReference type="Rhea" id="RHEA-COMP:10747"/>
        <dbReference type="Rhea" id="RHEA-COMP:10748"/>
        <dbReference type="ChEBI" id="CHEBI:83833"/>
        <dbReference type="ChEBI" id="CHEBI:83834"/>
        <dbReference type="EC" id="5.2.1.8"/>
    </reaction>
</comment>
<comment type="subcellular location">
    <subcellularLocation>
        <location>Cytoplasm</location>
    </subcellularLocation>
    <text evidence="1">About half TF is bound to the ribosome near the polypeptide exit tunnel while the other half is free in the cytoplasm.</text>
</comment>
<comment type="domain">
    <text evidence="1">Consists of 3 domains; the N-terminus binds the ribosome, the middle domain has PPIase activity, while the C-terminus has intrinsic chaperone activity on its own.</text>
</comment>
<comment type="similarity">
    <text evidence="1">Belongs to the FKBP-type PPIase family. Tig subfamily.</text>
</comment>
<gene>
    <name evidence="1" type="primary">tig</name>
    <name type="ordered locus">NMCC_1225</name>
</gene>
<feature type="chain" id="PRO_1000198170" description="Trigger factor">
    <location>
        <begin position="1"/>
        <end position="436"/>
    </location>
</feature>
<feature type="domain" description="PPIase FKBP-type" evidence="1">
    <location>
        <begin position="162"/>
        <end position="247"/>
    </location>
</feature>